<feature type="chain" id="PRO_0000169568" description="Ribosomal RNA large subunit methyltransferase J">
    <location>
        <begin position="1"/>
        <end position="281"/>
    </location>
</feature>
<feature type="active site" description="Proton acceptor" evidence="1">
    <location>
        <position position="165"/>
    </location>
</feature>
<feature type="binding site" evidence="1">
    <location>
        <position position="19"/>
    </location>
    <ligand>
        <name>S-adenosyl-L-methionine</name>
        <dbReference type="ChEBI" id="CHEBI:59789"/>
    </ligand>
</feature>
<feature type="binding site" evidence="1">
    <location>
        <position position="42"/>
    </location>
    <ligand>
        <name>S-adenosyl-L-methionine</name>
        <dbReference type="ChEBI" id="CHEBI:59789"/>
    </ligand>
</feature>
<feature type="binding site" evidence="1">
    <location>
        <position position="101"/>
    </location>
    <ligand>
        <name>S-adenosyl-L-methionine</name>
        <dbReference type="ChEBI" id="CHEBI:59789"/>
    </ligand>
</feature>
<feature type="binding site" evidence="1">
    <location>
        <position position="119"/>
    </location>
    <ligand>
        <name>S-adenosyl-L-methionine</name>
        <dbReference type="ChEBI" id="CHEBI:59789"/>
    </ligand>
</feature>
<feature type="binding site" evidence="1">
    <location>
        <begin position="144"/>
        <end position="145"/>
    </location>
    <ligand>
        <name>S-adenosyl-L-methionine</name>
        <dbReference type="ChEBI" id="CHEBI:59789"/>
    </ligand>
</feature>
<feature type="binding site" evidence="1">
    <location>
        <position position="165"/>
    </location>
    <ligand>
        <name>S-adenosyl-L-methionine</name>
        <dbReference type="ChEBI" id="CHEBI:59789"/>
    </ligand>
</feature>
<feature type="site" description="Interaction with substrate rRNA" evidence="1">
    <location>
        <position position="4"/>
    </location>
</feature>
<keyword id="KW-0489">Methyltransferase</keyword>
<keyword id="KW-1185">Reference proteome</keyword>
<keyword id="KW-0694">RNA-binding</keyword>
<keyword id="KW-0698">rRNA processing</keyword>
<keyword id="KW-0949">S-adenosyl-L-methionine</keyword>
<keyword id="KW-0808">Transferase</keyword>
<reference key="1">
    <citation type="journal article" date="1991" name="Gene">
        <title>Nucleotide sequence of a cluster of genes involved in the transformation of Haemophilus influenzae Rd.</title>
        <authorList>
            <person name="Tomb J.-F."/>
            <person name="El-Hajj H."/>
            <person name="Smith H.O."/>
        </authorList>
    </citation>
    <scope>NUCLEOTIDE SEQUENCE [GENOMIC DNA]</scope>
    <source>
        <strain>ATCC 51907 / DSM 11121 / KW20 / Rd</strain>
    </source>
</reference>
<reference key="2">
    <citation type="journal article" date="1995" name="Science">
        <title>Whole-genome random sequencing and assembly of Haemophilus influenzae Rd.</title>
        <authorList>
            <person name="Fleischmann R.D."/>
            <person name="Adams M.D."/>
            <person name="White O."/>
            <person name="Clayton R.A."/>
            <person name="Kirkness E.F."/>
            <person name="Kerlavage A.R."/>
            <person name="Bult C.J."/>
            <person name="Tomb J.-F."/>
            <person name="Dougherty B.A."/>
            <person name="Merrick J.M."/>
            <person name="McKenney K."/>
            <person name="Sutton G.G."/>
            <person name="FitzHugh W."/>
            <person name="Fields C.A."/>
            <person name="Gocayne J.D."/>
            <person name="Scott J.D."/>
            <person name="Shirley R."/>
            <person name="Liu L.-I."/>
            <person name="Glodek A."/>
            <person name="Kelley J.M."/>
            <person name="Weidman J.F."/>
            <person name="Phillips C.A."/>
            <person name="Spriggs T."/>
            <person name="Hedblom E."/>
            <person name="Cotton M.D."/>
            <person name="Utterback T.R."/>
            <person name="Hanna M.C."/>
            <person name="Nguyen D.T."/>
            <person name="Saudek D.M."/>
            <person name="Brandon R.C."/>
            <person name="Fine L.D."/>
            <person name="Fritchman J.L."/>
            <person name="Fuhrmann J.L."/>
            <person name="Geoghagen N.S.M."/>
            <person name="Gnehm C.L."/>
            <person name="McDonald L.A."/>
            <person name="Small K.V."/>
            <person name="Fraser C.M."/>
            <person name="Smith H.O."/>
            <person name="Venter J.C."/>
        </authorList>
    </citation>
    <scope>NUCLEOTIDE SEQUENCE [LARGE SCALE GENOMIC DNA]</scope>
    <source>
        <strain>ATCC 51907 / DSM 11121 / KW20 / Rd</strain>
    </source>
</reference>
<reference key="3">
    <citation type="journal article" date="2000" name="Electrophoresis">
        <title>Two-dimensional map of the proteome of Haemophilus influenzae.</title>
        <authorList>
            <person name="Langen H."/>
            <person name="Takacs B."/>
            <person name="Evers S."/>
            <person name="Berndt P."/>
            <person name="Lahm H.W."/>
            <person name="Wipf B."/>
            <person name="Gray C."/>
            <person name="Fountoulakis M."/>
        </authorList>
    </citation>
    <scope>IDENTIFICATION BY MASS SPECTROMETRY</scope>
    <source>
        <strain>ATCC 51907 / DSM 11121 / KW20 / Rd</strain>
    </source>
</reference>
<organism>
    <name type="scientific">Haemophilus influenzae (strain ATCC 51907 / DSM 11121 / KW20 / Rd)</name>
    <dbReference type="NCBI Taxonomy" id="71421"/>
    <lineage>
        <taxon>Bacteria</taxon>
        <taxon>Pseudomonadati</taxon>
        <taxon>Pseudomonadota</taxon>
        <taxon>Gammaproteobacteria</taxon>
        <taxon>Pasteurellales</taxon>
        <taxon>Pasteurellaceae</taxon>
        <taxon>Haemophilus</taxon>
    </lineage>
</organism>
<dbReference type="EC" id="2.1.1.266" evidence="1"/>
<dbReference type="EMBL" id="M62809">
    <property type="protein sequence ID" value="AAA25006.1"/>
    <property type="molecule type" value="Genomic_DNA"/>
</dbReference>
<dbReference type="EMBL" id="L42023">
    <property type="protein sequence ID" value="AAC22100.1"/>
    <property type="molecule type" value="Genomic_DNA"/>
</dbReference>
<dbReference type="PIR" id="E64068">
    <property type="entry name" value="E64068"/>
</dbReference>
<dbReference type="RefSeq" id="NP_438602.1">
    <property type="nucleotide sequence ID" value="NC_000907.1"/>
</dbReference>
<dbReference type="SMR" id="P31777"/>
<dbReference type="STRING" id="71421.HI_0441"/>
<dbReference type="EnsemblBacteria" id="AAC22100">
    <property type="protein sequence ID" value="AAC22100"/>
    <property type="gene ID" value="HI_0441"/>
</dbReference>
<dbReference type="KEGG" id="hin:HI_0441"/>
<dbReference type="PATRIC" id="fig|71421.8.peg.461"/>
<dbReference type="eggNOG" id="COG2961">
    <property type="taxonomic scope" value="Bacteria"/>
</dbReference>
<dbReference type="HOGENOM" id="CLU_061769_0_0_6"/>
<dbReference type="OrthoDB" id="9791274at2"/>
<dbReference type="PhylomeDB" id="P31777"/>
<dbReference type="BioCyc" id="HINF71421:G1GJ1-456-MONOMER"/>
<dbReference type="Proteomes" id="UP000000579">
    <property type="component" value="Chromosome"/>
</dbReference>
<dbReference type="GO" id="GO:0005829">
    <property type="term" value="C:cytosol"/>
    <property type="evidence" value="ECO:0000318"/>
    <property type="project" value="GO_Central"/>
</dbReference>
<dbReference type="GO" id="GO:0036307">
    <property type="term" value="F:23S rRNA (adenine(2030)-N(6))-methyltransferase activity"/>
    <property type="evidence" value="ECO:0000318"/>
    <property type="project" value="GO_Central"/>
</dbReference>
<dbReference type="GO" id="GO:0003723">
    <property type="term" value="F:RNA binding"/>
    <property type="evidence" value="ECO:0007669"/>
    <property type="project" value="UniProtKB-UniRule"/>
</dbReference>
<dbReference type="GO" id="GO:0070475">
    <property type="term" value="P:rRNA base methylation"/>
    <property type="evidence" value="ECO:0000318"/>
    <property type="project" value="GO_Central"/>
</dbReference>
<dbReference type="FunFam" id="3.40.50.150:FF:000037">
    <property type="entry name" value="Ribosomal RNA large subunit methyltransferase J"/>
    <property type="match status" value="1"/>
</dbReference>
<dbReference type="Gene3D" id="3.40.50.150">
    <property type="entry name" value="Vaccinia Virus protein VP39"/>
    <property type="match status" value="1"/>
</dbReference>
<dbReference type="HAMAP" id="MF_00934">
    <property type="entry name" value="23SrRNA_methyltr_J"/>
    <property type="match status" value="1"/>
</dbReference>
<dbReference type="InterPro" id="IPR007473">
    <property type="entry name" value="RlmJ"/>
</dbReference>
<dbReference type="InterPro" id="IPR029063">
    <property type="entry name" value="SAM-dependent_MTases_sf"/>
</dbReference>
<dbReference type="PANTHER" id="PTHR37426">
    <property type="entry name" value="RIBOSOMAL RNA LARGE SUBUNIT METHYLTRANSFERASE J"/>
    <property type="match status" value="1"/>
</dbReference>
<dbReference type="PANTHER" id="PTHR37426:SF1">
    <property type="entry name" value="RIBOSOMAL RNA LARGE SUBUNIT METHYLTRANSFERASE J"/>
    <property type="match status" value="1"/>
</dbReference>
<dbReference type="Pfam" id="PF04378">
    <property type="entry name" value="RsmJ"/>
    <property type="match status" value="1"/>
</dbReference>
<dbReference type="SUPFAM" id="SSF53335">
    <property type="entry name" value="S-adenosyl-L-methionine-dependent methyltransferases"/>
    <property type="match status" value="1"/>
</dbReference>
<dbReference type="PROSITE" id="PS00092">
    <property type="entry name" value="N6_MTASE"/>
    <property type="match status" value="2"/>
</dbReference>
<name>RLMJ_HAEIN</name>
<protein>
    <recommendedName>
        <fullName evidence="1">Ribosomal RNA large subunit methyltransferase J</fullName>
        <ecNumber evidence="1">2.1.1.266</ecNumber>
    </recommendedName>
    <alternativeName>
        <fullName evidence="1">23S rRNA (adenine(2030)-N6)-methyltransferase</fullName>
    </alternativeName>
    <alternativeName>
        <fullName evidence="1">23S rRNA m6A2030 methyltransferase</fullName>
    </alternativeName>
    <alternativeName>
        <fullName>ORFJ</fullName>
    </alternativeName>
</protein>
<evidence type="ECO:0000255" key="1">
    <source>
        <dbReference type="HAMAP-Rule" id="MF_00934"/>
    </source>
</evidence>
<gene>
    <name evidence="1" type="primary">rlmJ</name>
    <name type="ordered locus">HI_0441</name>
</gene>
<accession>P31777</accession>
<comment type="function">
    <text evidence="1">Specifically methylates the adenine in position 2030 of 23S rRNA.</text>
</comment>
<comment type="catalytic activity">
    <reaction evidence="1">
        <text>adenosine(2030) in 23S rRNA + S-adenosyl-L-methionine = N(6)-methyladenosine(2030) in 23S rRNA + S-adenosyl-L-homocysteine + H(+)</text>
        <dbReference type="Rhea" id="RHEA:43736"/>
        <dbReference type="Rhea" id="RHEA-COMP:10668"/>
        <dbReference type="Rhea" id="RHEA-COMP:10669"/>
        <dbReference type="ChEBI" id="CHEBI:15378"/>
        <dbReference type="ChEBI" id="CHEBI:57856"/>
        <dbReference type="ChEBI" id="CHEBI:59789"/>
        <dbReference type="ChEBI" id="CHEBI:74411"/>
        <dbReference type="ChEBI" id="CHEBI:74449"/>
        <dbReference type="EC" id="2.1.1.266"/>
    </reaction>
</comment>
<comment type="subunit">
    <text evidence="1">Monomer.</text>
</comment>
<comment type="similarity">
    <text evidence="1">Belongs to the RlmJ family.</text>
</comment>
<sequence length="281" mass="32217">MLSYHHSFHAGNHADVLKHIVLMLILENLKLKEKGFFYLDTHSGVGRYRLSSNESEKTGEYKEGIGRLWDQTDLPEDIARYVKMIKKLNYGGKELRYYAGSPLIAAELLRSQDRALLTELHPSDYPILRNNFSDDKNVTVKCDNGFQQVKATLPPKERRGLVLIDPPYELKDDYDLVVKAIEEGYKRFATGTYAIWYPVVLRQQTKRIFKGLEATGIRKILKIELAVRPDSDQRGMTASGMVVINPPWTLETQMKEILPYLTKTLVPEGTGSWTVEWITPE</sequence>
<proteinExistence type="evidence at protein level"/>